<keyword id="KW-0963">Cytoplasm</keyword>
<keyword id="KW-0255">Endonuclease</keyword>
<keyword id="KW-0378">Hydrolase</keyword>
<keyword id="KW-0479">Metal-binding</keyword>
<keyword id="KW-0540">Nuclease</keyword>
<keyword id="KW-0690">Ribosome biogenesis</keyword>
<keyword id="KW-0698">rRNA processing</keyword>
<keyword id="KW-0862">Zinc</keyword>
<reference key="1">
    <citation type="journal article" date="2007" name="Nat. Biotechnol.">
        <title>Comparative analysis of the complete genome sequence of the plant growth-promoting bacterium Bacillus amyloliquefaciens FZB42.</title>
        <authorList>
            <person name="Chen X.H."/>
            <person name="Koumoutsi A."/>
            <person name="Scholz R."/>
            <person name="Eisenreich A."/>
            <person name="Schneider K."/>
            <person name="Heinemeyer I."/>
            <person name="Morgenstern B."/>
            <person name="Voss B."/>
            <person name="Hess W.R."/>
            <person name="Reva O."/>
            <person name="Junge H."/>
            <person name="Voigt B."/>
            <person name="Jungblut P.R."/>
            <person name="Vater J."/>
            <person name="Suessmuth R."/>
            <person name="Liesegang H."/>
            <person name="Strittmatter A."/>
            <person name="Gottschalk G."/>
            <person name="Borriss R."/>
        </authorList>
    </citation>
    <scope>NUCLEOTIDE SEQUENCE [LARGE SCALE GENOMIC DNA]</scope>
    <source>
        <strain>DSM 23117 / BGSC 10A6 / LMG 26770 / FZB42</strain>
    </source>
</reference>
<evidence type="ECO:0000255" key="1">
    <source>
        <dbReference type="HAMAP-Rule" id="MF_00009"/>
    </source>
</evidence>
<name>YBEY_BACVZ</name>
<feature type="chain" id="PRO_1000073892" description="Endoribonuclease YbeY">
    <location>
        <begin position="1"/>
        <end position="157"/>
    </location>
</feature>
<feature type="binding site" evidence="1">
    <location>
        <position position="122"/>
    </location>
    <ligand>
        <name>Zn(2+)</name>
        <dbReference type="ChEBI" id="CHEBI:29105"/>
        <note>catalytic</note>
    </ligand>
</feature>
<feature type="binding site" evidence="1">
    <location>
        <position position="126"/>
    </location>
    <ligand>
        <name>Zn(2+)</name>
        <dbReference type="ChEBI" id="CHEBI:29105"/>
        <note>catalytic</note>
    </ligand>
</feature>
<feature type="binding site" evidence="1">
    <location>
        <position position="132"/>
    </location>
    <ligand>
        <name>Zn(2+)</name>
        <dbReference type="ChEBI" id="CHEBI:29105"/>
        <note>catalytic</note>
    </ligand>
</feature>
<comment type="function">
    <text evidence="1">Single strand-specific metallo-endoribonuclease involved in late-stage 70S ribosome quality control and in maturation of the 3' terminus of the 16S rRNA.</text>
</comment>
<comment type="cofactor">
    <cofactor evidence="1">
        <name>Zn(2+)</name>
        <dbReference type="ChEBI" id="CHEBI:29105"/>
    </cofactor>
    <text evidence="1">Binds 1 zinc ion.</text>
</comment>
<comment type="subcellular location">
    <subcellularLocation>
        <location evidence="1">Cytoplasm</location>
    </subcellularLocation>
</comment>
<comment type="similarity">
    <text evidence="1">Belongs to the endoribonuclease YbeY family.</text>
</comment>
<sequence length="157" mass="17727">MSLLIDIVDETNSVSADALQEVEKLLQFAAEKEGVQDQAEVSVTIVTNEEIREINRDYRGKDTPTDVISFALEEEGEDEVEIVGADMPPVLGDIIISADRTKEQAEEYGHSFMRELGFLAVHGFLHLLGYDHMTKEEEEEMFSKQKDLLDEYGLTRS</sequence>
<proteinExistence type="inferred from homology"/>
<dbReference type="EC" id="3.1.-.-" evidence="1"/>
<dbReference type="EMBL" id="CP000560">
    <property type="protein sequence ID" value="ABS74722.1"/>
    <property type="molecule type" value="Genomic_DNA"/>
</dbReference>
<dbReference type="RefSeq" id="WP_012118016.1">
    <property type="nucleotide sequence ID" value="NC_009725.2"/>
</dbReference>
<dbReference type="SMR" id="A7Z6U6"/>
<dbReference type="GeneID" id="93081500"/>
<dbReference type="KEGG" id="bay:RBAM_023620"/>
<dbReference type="HOGENOM" id="CLU_106710_3_0_9"/>
<dbReference type="Proteomes" id="UP000001120">
    <property type="component" value="Chromosome"/>
</dbReference>
<dbReference type="GO" id="GO:0005737">
    <property type="term" value="C:cytoplasm"/>
    <property type="evidence" value="ECO:0007669"/>
    <property type="project" value="UniProtKB-SubCell"/>
</dbReference>
<dbReference type="GO" id="GO:0004222">
    <property type="term" value="F:metalloendopeptidase activity"/>
    <property type="evidence" value="ECO:0007669"/>
    <property type="project" value="InterPro"/>
</dbReference>
<dbReference type="GO" id="GO:0004521">
    <property type="term" value="F:RNA endonuclease activity"/>
    <property type="evidence" value="ECO:0007669"/>
    <property type="project" value="UniProtKB-UniRule"/>
</dbReference>
<dbReference type="GO" id="GO:0008270">
    <property type="term" value="F:zinc ion binding"/>
    <property type="evidence" value="ECO:0007669"/>
    <property type="project" value="UniProtKB-UniRule"/>
</dbReference>
<dbReference type="GO" id="GO:0006364">
    <property type="term" value="P:rRNA processing"/>
    <property type="evidence" value="ECO:0007669"/>
    <property type="project" value="UniProtKB-UniRule"/>
</dbReference>
<dbReference type="Gene3D" id="3.40.390.30">
    <property type="entry name" value="Metalloproteases ('zincins'), catalytic domain"/>
    <property type="match status" value="1"/>
</dbReference>
<dbReference type="HAMAP" id="MF_00009">
    <property type="entry name" value="Endoribonucl_YbeY"/>
    <property type="match status" value="1"/>
</dbReference>
<dbReference type="InterPro" id="IPR023091">
    <property type="entry name" value="MetalPrtase_cat_dom_sf_prd"/>
</dbReference>
<dbReference type="InterPro" id="IPR002036">
    <property type="entry name" value="YbeY"/>
</dbReference>
<dbReference type="InterPro" id="IPR020549">
    <property type="entry name" value="YbeY_CS"/>
</dbReference>
<dbReference type="NCBIfam" id="TIGR00043">
    <property type="entry name" value="rRNA maturation RNase YbeY"/>
    <property type="match status" value="1"/>
</dbReference>
<dbReference type="PANTHER" id="PTHR46986">
    <property type="entry name" value="ENDORIBONUCLEASE YBEY, CHLOROPLASTIC"/>
    <property type="match status" value="1"/>
</dbReference>
<dbReference type="PANTHER" id="PTHR46986:SF1">
    <property type="entry name" value="ENDORIBONUCLEASE YBEY, CHLOROPLASTIC"/>
    <property type="match status" value="1"/>
</dbReference>
<dbReference type="Pfam" id="PF02130">
    <property type="entry name" value="YbeY"/>
    <property type="match status" value="1"/>
</dbReference>
<dbReference type="SUPFAM" id="SSF55486">
    <property type="entry name" value="Metalloproteases ('zincins'), catalytic domain"/>
    <property type="match status" value="1"/>
</dbReference>
<dbReference type="PROSITE" id="PS01306">
    <property type="entry name" value="UPF0054"/>
    <property type="match status" value="1"/>
</dbReference>
<gene>
    <name evidence="1" type="primary">ybeY</name>
    <name type="ordered locus">RBAM_023620</name>
</gene>
<organism>
    <name type="scientific">Bacillus velezensis (strain DSM 23117 / BGSC 10A6 / LMG 26770 / FZB42)</name>
    <name type="common">Bacillus amyloliquefaciens subsp. plantarum</name>
    <dbReference type="NCBI Taxonomy" id="326423"/>
    <lineage>
        <taxon>Bacteria</taxon>
        <taxon>Bacillati</taxon>
        <taxon>Bacillota</taxon>
        <taxon>Bacilli</taxon>
        <taxon>Bacillales</taxon>
        <taxon>Bacillaceae</taxon>
        <taxon>Bacillus</taxon>
        <taxon>Bacillus amyloliquefaciens group</taxon>
    </lineage>
</organism>
<accession>A7Z6U6</accession>
<protein>
    <recommendedName>
        <fullName evidence="1">Endoribonuclease YbeY</fullName>
        <ecNumber evidence="1">3.1.-.-</ecNumber>
    </recommendedName>
</protein>